<sequence>MKFTTPISLISLFVSSALAAPTPENEARDAIPVSVSYDPRYDNAGTSMNDVSCSNGVNGLVTKWPTFGSVPGFARIGGAPTIPGWNSPNCGKCYKLQYEQNTIYVTAIDAAPGGFNIATSAMDQLTNGMAVELGRVQATYEEADPSHCASGV</sequence>
<organism>
    <name type="scientific">Aspergillus fumigatus (strain ATCC MYA-4609 / CBS 101355 / FGSC A1100 / Af293)</name>
    <name type="common">Neosartorya fumigata</name>
    <dbReference type="NCBI Taxonomy" id="330879"/>
    <lineage>
        <taxon>Eukaryota</taxon>
        <taxon>Fungi</taxon>
        <taxon>Dikarya</taxon>
        <taxon>Ascomycota</taxon>
        <taxon>Pezizomycotina</taxon>
        <taxon>Eurotiomycetes</taxon>
        <taxon>Eurotiomycetidae</taxon>
        <taxon>Eurotiales</taxon>
        <taxon>Aspergillaceae</taxon>
        <taxon>Aspergillus</taxon>
        <taxon>Aspergillus subgen. Fumigati</taxon>
    </lineage>
</organism>
<gene>
    <name type="ORF">AFUA_2G12630</name>
</gene>
<name>AL15_ASPFU</name>
<comment type="subcellular location">
    <subcellularLocation>
        <location evidence="3">Secreted</location>
    </subcellularLocation>
</comment>
<comment type="allergen">
    <text>Causes an allergic reaction in human.</text>
</comment>
<comment type="similarity">
    <text evidence="3">Belongs to the cerato-platanin family.</text>
</comment>
<accession>O60022</accession>
<accession>P82261</accession>
<accession>Q4X0Q8</accession>
<proteinExistence type="evidence at protein level"/>
<reference key="1">
    <citation type="submission" date="1997-10" db="EMBL/GenBank/DDBJ databases">
        <title>A novel allergen of Aspergillus fumigatus (rAsp f 13) shares homology with a 19 kD antigen of Coccidioides immitis.</title>
        <authorList>
            <person name="Hemmann S."/>
            <person name="Blaser K."/>
            <person name="Crameri R."/>
        </authorList>
    </citation>
    <scope>NUCLEOTIDE SEQUENCE [MRNA]</scope>
    <source>
        <strain>ATCC 42202 / AF-102 / Ag 507</strain>
    </source>
</reference>
<reference key="2">
    <citation type="journal article" date="2005" name="Nature">
        <title>Genomic sequence of the pathogenic and allergenic filamentous fungus Aspergillus fumigatus.</title>
        <authorList>
            <person name="Nierman W.C."/>
            <person name="Pain A."/>
            <person name="Anderson M.J."/>
            <person name="Wortman J.R."/>
            <person name="Kim H.S."/>
            <person name="Arroyo J."/>
            <person name="Berriman M."/>
            <person name="Abe K."/>
            <person name="Archer D.B."/>
            <person name="Bermejo C."/>
            <person name="Bennett J.W."/>
            <person name="Bowyer P."/>
            <person name="Chen D."/>
            <person name="Collins M."/>
            <person name="Coulsen R."/>
            <person name="Davies R."/>
            <person name="Dyer P.S."/>
            <person name="Farman M.L."/>
            <person name="Fedorova N."/>
            <person name="Fedorova N.D."/>
            <person name="Feldblyum T.V."/>
            <person name="Fischer R."/>
            <person name="Fosker N."/>
            <person name="Fraser A."/>
            <person name="Garcia J.L."/>
            <person name="Garcia M.J."/>
            <person name="Goble A."/>
            <person name="Goldman G.H."/>
            <person name="Gomi K."/>
            <person name="Griffith-Jones S."/>
            <person name="Gwilliam R."/>
            <person name="Haas B.J."/>
            <person name="Haas H."/>
            <person name="Harris D.E."/>
            <person name="Horiuchi H."/>
            <person name="Huang J."/>
            <person name="Humphray S."/>
            <person name="Jimenez J."/>
            <person name="Keller N."/>
            <person name="Khouri H."/>
            <person name="Kitamoto K."/>
            <person name="Kobayashi T."/>
            <person name="Konzack S."/>
            <person name="Kulkarni R."/>
            <person name="Kumagai T."/>
            <person name="Lafton A."/>
            <person name="Latge J.-P."/>
            <person name="Li W."/>
            <person name="Lord A."/>
            <person name="Lu C."/>
            <person name="Majoros W.H."/>
            <person name="May G.S."/>
            <person name="Miller B.L."/>
            <person name="Mohamoud Y."/>
            <person name="Molina M."/>
            <person name="Monod M."/>
            <person name="Mouyna I."/>
            <person name="Mulligan S."/>
            <person name="Murphy L.D."/>
            <person name="O'Neil S."/>
            <person name="Paulsen I."/>
            <person name="Penalva M.A."/>
            <person name="Pertea M."/>
            <person name="Price C."/>
            <person name="Pritchard B.L."/>
            <person name="Quail M.A."/>
            <person name="Rabbinowitsch E."/>
            <person name="Rawlins N."/>
            <person name="Rajandream M.A."/>
            <person name="Reichard U."/>
            <person name="Renauld H."/>
            <person name="Robson G.D."/>
            <person name="Rodriguez de Cordoba S."/>
            <person name="Rodriguez-Pena J.M."/>
            <person name="Ronning C.M."/>
            <person name="Rutter S."/>
            <person name="Salzberg S.L."/>
            <person name="Sanchez M."/>
            <person name="Sanchez-Ferrero J.C."/>
            <person name="Saunders D."/>
            <person name="Seeger K."/>
            <person name="Squares R."/>
            <person name="Squares S."/>
            <person name="Takeuchi M."/>
            <person name="Tekaia F."/>
            <person name="Turner G."/>
            <person name="Vazquez de Aldana C.R."/>
            <person name="Weidman J."/>
            <person name="White O."/>
            <person name="Woodward J.R."/>
            <person name="Yu J.-H."/>
            <person name="Fraser C.M."/>
            <person name="Galagan J.E."/>
            <person name="Asai K."/>
            <person name="Machida M."/>
            <person name="Hall N."/>
            <person name="Barrell B.G."/>
            <person name="Denning D.W."/>
        </authorList>
    </citation>
    <scope>NUCLEOTIDE SEQUENCE [LARGE SCALE GENOMIC DNA]</scope>
    <source>
        <strain>ATCC MYA-4609 / CBS 101355 / FGSC A1100 / Af293</strain>
    </source>
</reference>
<reference key="3">
    <citation type="submission" date="1999-12" db="UniProtKB">
        <authorList>
            <person name="Sarma P.U."/>
            <person name="Gupta T.M."/>
            <person name="Fairwell T."/>
        </authorList>
    </citation>
    <scope>PROTEIN SEQUENCE OF 29-49</scope>
    <source>
        <strain>AF-285 / Indian isolate</strain>
    </source>
</reference>
<evidence type="ECO:0000250" key="1"/>
<evidence type="ECO:0000255" key="2"/>
<evidence type="ECO:0000305" key="3"/>
<feature type="signal peptide" evidence="2">
    <location>
        <begin position="1"/>
        <end position="19"/>
    </location>
</feature>
<feature type="chain" id="PRO_0000004998" description="Allergen Asp f 15">
    <location>
        <begin position="20"/>
        <end position="152"/>
    </location>
</feature>
<feature type="disulfide bond" evidence="1">
    <location>
        <begin position="53"/>
        <end position="90"/>
    </location>
</feature>
<feature type="disulfide bond" evidence="1">
    <location>
        <begin position="93"/>
        <end position="148"/>
    </location>
</feature>
<feature type="sequence conflict" description="In Ref. 3; AA sequence." evidence="3" ref="3">
    <original>Y</original>
    <variation>RD</variation>
    <location>
        <position position="41"/>
    </location>
</feature>
<protein>
    <recommendedName>
        <fullName>Allergen Asp f 15</fullName>
    </recommendedName>
    <alternativeName>
        <fullName>Allergen Asp f 13</fullName>
    </alternativeName>
    <allergenName>Asp f 15</allergenName>
</protein>
<keyword id="KW-0020">Allergen</keyword>
<keyword id="KW-0903">Direct protein sequencing</keyword>
<keyword id="KW-1015">Disulfide bond</keyword>
<keyword id="KW-1185">Reference proteome</keyword>
<keyword id="KW-0964">Secreted</keyword>
<keyword id="KW-0732">Signal</keyword>
<dbReference type="EMBL" id="AJ002026">
    <property type="protein sequence ID" value="CAA05149.1"/>
    <property type="molecule type" value="mRNA"/>
</dbReference>
<dbReference type="EMBL" id="AAHF01000001">
    <property type="protein sequence ID" value="EAL93557.1"/>
    <property type="molecule type" value="Genomic_DNA"/>
</dbReference>
<dbReference type="RefSeq" id="XP_755595.1">
    <property type="nucleotide sequence ID" value="XM_750502.1"/>
</dbReference>
<dbReference type="SMR" id="O60022"/>
<dbReference type="STRING" id="330879.O60022"/>
<dbReference type="Allergome" id="3112">
    <property type="allergen name" value="Asp f 15.0101"/>
</dbReference>
<dbReference type="Allergome" id="67">
    <property type="allergen name" value="Asp f 15"/>
</dbReference>
<dbReference type="EnsemblFungi" id="EAL93557">
    <property type="protein sequence ID" value="EAL93557"/>
    <property type="gene ID" value="AFUA_2G12630"/>
</dbReference>
<dbReference type="GeneID" id="3512975"/>
<dbReference type="KEGG" id="afm:AFUA_2G12630"/>
<dbReference type="VEuPathDB" id="FungiDB:Afu2g12630"/>
<dbReference type="eggNOG" id="ENOG502SQTH">
    <property type="taxonomic scope" value="Eukaryota"/>
</dbReference>
<dbReference type="HOGENOM" id="CLU_111635_0_0_1"/>
<dbReference type="InParanoid" id="O60022"/>
<dbReference type="OMA" id="QCGTCYG"/>
<dbReference type="OrthoDB" id="4898945at2759"/>
<dbReference type="BRENDA" id="3.4.23.18">
    <property type="organism ID" value="508"/>
</dbReference>
<dbReference type="Proteomes" id="UP000002530">
    <property type="component" value="Chromosome 2"/>
</dbReference>
<dbReference type="GO" id="GO:0005576">
    <property type="term" value="C:extracellular region"/>
    <property type="evidence" value="ECO:0007669"/>
    <property type="project" value="UniProtKB-SubCell"/>
</dbReference>
<dbReference type="CDD" id="cd22778">
    <property type="entry name" value="DPBB_CEPL-like"/>
    <property type="match status" value="1"/>
</dbReference>
<dbReference type="Gene3D" id="2.40.40.10">
    <property type="entry name" value="RlpA-like domain"/>
    <property type="match status" value="1"/>
</dbReference>
<dbReference type="InterPro" id="IPR010829">
    <property type="entry name" value="Cerato-platanin"/>
</dbReference>
<dbReference type="InterPro" id="IPR036908">
    <property type="entry name" value="RlpA-like_sf"/>
</dbReference>
<dbReference type="Pfam" id="PF07249">
    <property type="entry name" value="Cerato-platanin"/>
    <property type="match status" value="1"/>
</dbReference>
<dbReference type="SUPFAM" id="SSF50685">
    <property type="entry name" value="Barwin-like endoglucanases"/>
    <property type="match status" value="1"/>
</dbReference>